<keyword id="KW-0963">Cytoplasm</keyword>
<keyword id="KW-0690">Ribosome biogenesis</keyword>
<gene>
    <name evidence="1" type="primary">rimP</name>
    <name type="ordered locus">CYA_0456</name>
</gene>
<accession>Q2JX22</accession>
<proteinExistence type="inferred from homology"/>
<reference key="1">
    <citation type="journal article" date="2007" name="ISME J.">
        <title>Population level functional diversity in a microbial community revealed by comparative genomic and metagenomic analyses.</title>
        <authorList>
            <person name="Bhaya D."/>
            <person name="Grossman A.R."/>
            <person name="Steunou A.-S."/>
            <person name="Khuri N."/>
            <person name="Cohan F.M."/>
            <person name="Hamamura N."/>
            <person name="Melendrez M.C."/>
            <person name="Bateson M.M."/>
            <person name="Ward D.M."/>
            <person name="Heidelberg J.F."/>
        </authorList>
    </citation>
    <scope>NUCLEOTIDE SEQUENCE [LARGE SCALE GENOMIC DNA]</scope>
    <source>
        <strain>JA-3-3Ab</strain>
    </source>
</reference>
<evidence type="ECO:0000255" key="1">
    <source>
        <dbReference type="HAMAP-Rule" id="MF_01077"/>
    </source>
</evidence>
<protein>
    <recommendedName>
        <fullName evidence="1">Ribosome maturation factor RimP</fullName>
    </recommendedName>
</protein>
<dbReference type="EMBL" id="CP000239">
    <property type="protein sequence ID" value="ABC98674.1"/>
    <property type="molecule type" value="Genomic_DNA"/>
</dbReference>
<dbReference type="RefSeq" id="WP_011429363.1">
    <property type="nucleotide sequence ID" value="NC_007775.1"/>
</dbReference>
<dbReference type="SMR" id="Q2JX22"/>
<dbReference type="STRING" id="321327.CYA_0456"/>
<dbReference type="KEGG" id="cya:CYA_0456"/>
<dbReference type="eggNOG" id="COG0779">
    <property type="taxonomic scope" value="Bacteria"/>
</dbReference>
<dbReference type="HOGENOM" id="CLU_070525_2_1_3"/>
<dbReference type="OrthoDB" id="9805006at2"/>
<dbReference type="Proteomes" id="UP000008818">
    <property type="component" value="Chromosome"/>
</dbReference>
<dbReference type="GO" id="GO:0005829">
    <property type="term" value="C:cytosol"/>
    <property type="evidence" value="ECO:0007669"/>
    <property type="project" value="TreeGrafter"/>
</dbReference>
<dbReference type="GO" id="GO:0000028">
    <property type="term" value="P:ribosomal small subunit assembly"/>
    <property type="evidence" value="ECO:0007669"/>
    <property type="project" value="TreeGrafter"/>
</dbReference>
<dbReference type="GO" id="GO:0006412">
    <property type="term" value="P:translation"/>
    <property type="evidence" value="ECO:0007669"/>
    <property type="project" value="TreeGrafter"/>
</dbReference>
<dbReference type="Gene3D" id="3.30.300.70">
    <property type="entry name" value="RimP-like superfamily, N-terminal"/>
    <property type="match status" value="1"/>
</dbReference>
<dbReference type="HAMAP" id="MF_01077">
    <property type="entry name" value="RimP"/>
    <property type="match status" value="1"/>
</dbReference>
<dbReference type="InterPro" id="IPR003728">
    <property type="entry name" value="Ribosome_maturation_RimP"/>
</dbReference>
<dbReference type="InterPro" id="IPR036847">
    <property type="entry name" value="RimP_C_sf"/>
</dbReference>
<dbReference type="InterPro" id="IPR028989">
    <property type="entry name" value="RimP_N"/>
</dbReference>
<dbReference type="InterPro" id="IPR035956">
    <property type="entry name" value="RimP_N_sf"/>
</dbReference>
<dbReference type="NCBIfam" id="NF000935">
    <property type="entry name" value="PRK00092.3-3"/>
    <property type="match status" value="1"/>
</dbReference>
<dbReference type="PANTHER" id="PTHR33867">
    <property type="entry name" value="RIBOSOME MATURATION FACTOR RIMP"/>
    <property type="match status" value="1"/>
</dbReference>
<dbReference type="PANTHER" id="PTHR33867:SF1">
    <property type="entry name" value="RIBOSOME MATURATION FACTOR RIMP"/>
    <property type="match status" value="1"/>
</dbReference>
<dbReference type="Pfam" id="PF02576">
    <property type="entry name" value="RimP_N"/>
    <property type="match status" value="1"/>
</dbReference>
<dbReference type="SUPFAM" id="SSF74942">
    <property type="entry name" value="YhbC-like, C-terminal domain"/>
    <property type="match status" value="1"/>
</dbReference>
<dbReference type="SUPFAM" id="SSF75420">
    <property type="entry name" value="YhbC-like, N-terminal domain"/>
    <property type="match status" value="1"/>
</dbReference>
<feature type="chain" id="PRO_1000064787" description="Ribosome maturation factor RimP">
    <location>
        <begin position="1"/>
        <end position="157"/>
    </location>
</feature>
<name>RIMP_SYNJA</name>
<comment type="function">
    <text evidence="1">Required for maturation of 30S ribosomal subunits.</text>
</comment>
<comment type="subcellular location">
    <subcellularLocation>
        <location evidence="1">Cytoplasm</location>
    </subcellularLocation>
</comment>
<comment type="similarity">
    <text evidence="1">Belongs to the RimP family.</text>
</comment>
<sequence>MVHPLIPQLESLARPLAARLGYELVQMVFHTNQYPPVLRVDIRPLDPEQETSHADCEAMSQALEVELDRVDLIPGHYVLEVSSPGISNLLISDRDFVVFKGFAVEVTVDPPYKGKAVWSGHLLGRDEEKVALSLKGRRVQLPRASVQRVVLSGAETE</sequence>
<organism>
    <name type="scientific">Synechococcus sp. (strain JA-3-3Ab)</name>
    <name type="common">Cyanobacteria bacterium Yellowstone A-Prime</name>
    <dbReference type="NCBI Taxonomy" id="321327"/>
    <lineage>
        <taxon>Bacteria</taxon>
        <taxon>Bacillati</taxon>
        <taxon>Cyanobacteriota</taxon>
        <taxon>Cyanophyceae</taxon>
        <taxon>Synechococcales</taxon>
        <taxon>Synechococcaceae</taxon>
        <taxon>Synechococcus</taxon>
    </lineage>
</organism>